<reference key="1">
    <citation type="journal article" date="2006" name="PLoS Genet.">
        <title>Genome sequence of Rickettsia bellii illuminates the role of amoebae in gene exchanges between intracellular pathogens.</title>
        <authorList>
            <person name="Ogata H."/>
            <person name="La Scola B."/>
            <person name="Audic S."/>
            <person name="Renesto P."/>
            <person name="Blanc G."/>
            <person name="Robert C."/>
            <person name="Fournier P.-E."/>
            <person name="Claverie J.-M."/>
            <person name="Raoult D."/>
        </authorList>
    </citation>
    <scope>NUCLEOTIDE SEQUENCE [LARGE SCALE GENOMIC DNA]</scope>
    <source>
        <strain>RML369-C</strain>
    </source>
</reference>
<name>NUOC_RICBR</name>
<gene>
    <name evidence="1" type="primary">nuoC</name>
    <name type="ordered locus">RBE_0396</name>
</gene>
<proteinExistence type="inferred from homology"/>
<organism>
    <name type="scientific">Rickettsia bellii (strain RML369-C)</name>
    <dbReference type="NCBI Taxonomy" id="336407"/>
    <lineage>
        <taxon>Bacteria</taxon>
        <taxon>Pseudomonadati</taxon>
        <taxon>Pseudomonadota</taxon>
        <taxon>Alphaproteobacteria</taxon>
        <taxon>Rickettsiales</taxon>
        <taxon>Rickettsiaceae</taxon>
        <taxon>Rickettsieae</taxon>
        <taxon>Rickettsia</taxon>
        <taxon>belli group</taxon>
    </lineage>
</organism>
<sequence length="196" mass="22945">MTLEKIIEKLAAKSSILISPITVKENLAYKVEPNFLLPFLKALKESEELRFTVLTDLFGSDFPEKAKRFEVVYNLLSLKLNKRLIIKTYVSEHESIPSAMSIFNATCWYEREVYDMFGINFDGNDDKRRILTDYEFEGHPLRKDFPLTGYTQVKYDEQTKKVAYEPVNLDIEYREFDFSSPWHSPTYTLPGDEKAK</sequence>
<feature type="chain" id="PRO_0000287857" description="NADH-quinone oxidoreductase subunit C">
    <location>
        <begin position="1"/>
        <end position="196"/>
    </location>
</feature>
<evidence type="ECO:0000255" key="1">
    <source>
        <dbReference type="HAMAP-Rule" id="MF_01357"/>
    </source>
</evidence>
<accession>Q1RJI7</accession>
<keyword id="KW-0997">Cell inner membrane</keyword>
<keyword id="KW-1003">Cell membrane</keyword>
<keyword id="KW-0472">Membrane</keyword>
<keyword id="KW-0520">NAD</keyword>
<keyword id="KW-0874">Quinone</keyword>
<keyword id="KW-1278">Translocase</keyword>
<keyword id="KW-0813">Transport</keyword>
<keyword id="KW-0830">Ubiquinone</keyword>
<comment type="function">
    <text evidence="1">NDH-1 shuttles electrons from NADH, via FMN and iron-sulfur (Fe-S) centers, to quinones in the respiratory chain. The immediate electron acceptor for the enzyme in this species is believed to be ubiquinone. Couples the redox reaction to proton translocation (for every two electrons transferred, four hydrogen ions are translocated across the cytoplasmic membrane), and thus conserves the redox energy in a proton gradient.</text>
</comment>
<comment type="catalytic activity">
    <reaction evidence="1">
        <text>a quinone + NADH + 5 H(+)(in) = a quinol + NAD(+) + 4 H(+)(out)</text>
        <dbReference type="Rhea" id="RHEA:57888"/>
        <dbReference type="ChEBI" id="CHEBI:15378"/>
        <dbReference type="ChEBI" id="CHEBI:24646"/>
        <dbReference type="ChEBI" id="CHEBI:57540"/>
        <dbReference type="ChEBI" id="CHEBI:57945"/>
        <dbReference type="ChEBI" id="CHEBI:132124"/>
    </reaction>
</comment>
<comment type="subunit">
    <text evidence="1">NDH-1 is composed of 14 different subunits. Subunits NuoB, C, D, E, F, and G constitute the peripheral sector of the complex.</text>
</comment>
<comment type="subcellular location">
    <subcellularLocation>
        <location evidence="1">Cell inner membrane</location>
        <topology evidence="1">Peripheral membrane protein</topology>
        <orientation evidence="1">Cytoplasmic side</orientation>
    </subcellularLocation>
</comment>
<comment type="similarity">
    <text evidence="1">Belongs to the complex I 30 kDa subunit family.</text>
</comment>
<dbReference type="EC" id="7.1.1.-" evidence="1"/>
<dbReference type="EMBL" id="CP000087">
    <property type="protein sequence ID" value="ABE04477.1"/>
    <property type="molecule type" value="Genomic_DNA"/>
</dbReference>
<dbReference type="RefSeq" id="WP_011477086.1">
    <property type="nucleotide sequence ID" value="NC_007940.1"/>
</dbReference>
<dbReference type="SMR" id="Q1RJI7"/>
<dbReference type="KEGG" id="rbe:RBE_0396"/>
<dbReference type="eggNOG" id="COG0852">
    <property type="taxonomic scope" value="Bacteria"/>
</dbReference>
<dbReference type="HOGENOM" id="CLU_042628_2_1_5"/>
<dbReference type="OrthoDB" id="9803286at2"/>
<dbReference type="Proteomes" id="UP000001951">
    <property type="component" value="Chromosome"/>
</dbReference>
<dbReference type="GO" id="GO:0005886">
    <property type="term" value="C:plasma membrane"/>
    <property type="evidence" value="ECO:0007669"/>
    <property type="project" value="UniProtKB-SubCell"/>
</dbReference>
<dbReference type="GO" id="GO:0008137">
    <property type="term" value="F:NADH dehydrogenase (ubiquinone) activity"/>
    <property type="evidence" value="ECO:0007669"/>
    <property type="project" value="InterPro"/>
</dbReference>
<dbReference type="GO" id="GO:0050136">
    <property type="term" value="F:NADH:ubiquinone reductase (non-electrogenic) activity"/>
    <property type="evidence" value="ECO:0007669"/>
    <property type="project" value="UniProtKB-UniRule"/>
</dbReference>
<dbReference type="GO" id="GO:0048038">
    <property type="term" value="F:quinone binding"/>
    <property type="evidence" value="ECO:0007669"/>
    <property type="project" value="UniProtKB-KW"/>
</dbReference>
<dbReference type="Gene3D" id="3.30.460.80">
    <property type="entry name" value="NADH:ubiquinone oxidoreductase, 30kDa subunit"/>
    <property type="match status" value="1"/>
</dbReference>
<dbReference type="HAMAP" id="MF_01357">
    <property type="entry name" value="NDH1_NuoC"/>
    <property type="match status" value="1"/>
</dbReference>
<dbReference type="InterPro" id="IPR010218">
    <property type="entry name" value="NADH_DH_suC"/>
</dbReference>
<dbReference type="InterPro" id="IPR037232">
    <property type="entry name" value="NADH_quin_OxRdtase_su_C/D-like"/>
</dbReference>
<dbReference type="InterPro" id="IPR001268">
    <property type="entry name" value="NADH_UbQ_OxRdtase_30kDa_su"/>
</dbReference>
<dbReference type="NCBIfam" id="TIGR01961">
    <property type="entry name" value="NuoC_fam"/>
    <property type="match status" value="1"/>
</dbReference>
<dbReference type="NCBIfam" id="NF004731">
    <property type="entry name" value="PRK06074.1-3"/>
    <property type="match status" value="1"/>
</dbReference>
<dbReference type="NCBIfam" id="NF004733">
    <property type="entry name" value="PRK06074.1-5"/>
    <property type="match status" value="1"/>
</dbReference>
<dbReference type="PANTHER" id="PTHR10884:SF14">
    <property type="entry name" value="NADH DEHYDROGENASE [UBIQUINONE] IRON-SULFUR PROTEIN 3, MITOCHONDRIAL"/>
    <property type="match status" value="1"/>
</dbReference>
<dbReference type="PANTHER" id="PTHR10884">
    <property type="entry name" value="NADH DEHYDROGENASE UBIQUINONE IRON-SULFUR PROTEIN 3"/>
    <property type="match status" value="1"/>
</dbReference>
<dbReference type="Pfam" id="PF00329">
    <property type="entry name" value="Complex1_30kDa"/>
    <property type="match status" value="1"/>
</dbReference>
<dbReference type="SUPFAM" id="SSF143243">
    <property type="entry name" value="Nqo5-like"/>
    <property type="match status" value="1"/>
</dbReference>
<protein>
    <recommendedName>
        <fullName evidence="1">NADH-quinone oxidoreductase subunit C</fullName>
        <ecNumber evidence="1">7.1.1.-</ecNumber>
    </recommendedName>
    <alternativeName>
        <fullName evidence="1">NADH dehydrogenase I subunit C</fullName>
    </alternativeName>
    <alternativeName>
        <fullName evidence="1">NDH-1 subunit C</fullName>
    </alternativeName>
</protein>